<evidence type="ECO:0000250" key="1">
    <source>
        <dbReference type="UniProtKB" id="P14678"/>
    </source>
</evidence>
<evidence type="ECO:0000255" key="2">
    <source>
        <dbReference type="PROSITE-ProRule" id="PRU01346"/>
    </source>
</evidence>
<evidence type="ECO:0000256" key="3">
    <source>
        <dbReference type="SAM" id="MobiDB-lite"/>
    </source>
</evidence>
<evidence type="ECO:0000269" key="4">
    <source>
    </source>
</evidence>
<evidence type="ECO:0000269" key="5">
    <source>
    </source>
</evidence>
<evidence type="ECO:0000269" key="6">
    <source>
    </source>
</evidence>
<evidence type="ECO:0000269" key="7">
    <source>
    </source>
</evidence>
<evidence type="ECO:0000269" key="8">
    <source>
    </source>
</evidence>
<evidence type="ECO:0000269" key="9">
    <source>
    </source>
</evidence>
<evidence type="ECO:0000269" key="10">
    <source>
    </source>
</evidence>
<evidence type="ECO:0000305" key="11"/>
<organism>
    <name type="scientific">Drosophila melanogaster</name>
    <name type="common">Fruit fly</name>
    <dbReference type="NCBI Taxonomy" id="7227"/>
    <lineage>
        <taxon>Eukaryota</taxon>
        <taxon>Metazoa</taxon>
        <taxon>Ecdysozoa</taxon>
        <taxon>Arthropoda</taxon>
        <taxon>Hexapoda</taxon>
        <taxon>Insecta</taxon>
        <taxon>Pterygota</taxon>
        <taxon>Neoptera</taxon>
        <taxon>Endopterygota</taxon>
        <taxon>Diptera</taxon>
        <taxon>Brachycera</taxon>
        <taxon>Muscomorpha</taxon>
        <taxon>Ephydroidea</taxon>
        <taxon>Drosophilidae</taxon>
        <taxon>Drosophila</taxon>
        <taxon>Sophophora</taxon>
    </lineage>
</organism>
<protein>
    <recommendedName>
        <fullName>Small nuclear ribonucleoprotein-associated protein B</fullName>
        <shortName>snRNP-B</shortName>
    </recommendedName>
    <alternativeName>
        <fullName>Sm protein B</fullName>
        <shortName>Sm-B</shortName>
        <shortName>SmB</shortName>
    </alternativeName>
</protein>
<proteinExistence type="evidence at protein level"/>
<keyword id="KW-0963">Cytoplasm</keyword>
<keyword id="KW-0488">Methylation</keyword>
<keyword id="KW-0507">mRNA processing</keyword>
<keyword id="KW-0508">mRNA splicing</keyword>
<keyword id="KW-0539">Nucleus</keyword>
<keyword id="KW-1185">Reference proteome</keyword>
<keyword id="KW-0677">Repeat</keyword>
<keyword id="KW-0687">Ribonucleoprotein</keyword>
<keyword id="KW-0694">RNA-binding</keyword>
<keyword id="KW-0747">Spliceosome</keyword>
<accession>Q05856</accession>
<accession>M9MRL9</accession>
<sequence length="199" mass="21021">MTIGKNNKMIQHLNYRVRIVLQDSRTFIGTFKAFDKHMNLILGDCEEFRKIRSKNSKVPEREEKRVLGFVLLRGENIVSLTVEGPPPPEEGLPRVPIPGAAPGPGIGRVAGRGMPINLSAVPAGLQGPVRGVGGPAQQHMAPMGRGVPRAPMMGAPPPGMIPGGMPSMPGNMGRGAPPPMRGPPPSMIRGAPPPGRGGY</sequence>
<reference key="1">
    <citation type="journal article" date="1993" name="Gene">
        <title>Comparison of the Drosophila melanogaster, human and murine Sm B cDNAs: evolutionary conservation.</title>
        <authorList>
            <person name="Brunet C."/>
            <person name="Quan T."/>
            <person name="Craft J.E."/>
        </authorList>
    </citation>
    <scope>NUCLEOTIDE SEQUENCE [MRNA]</scope>
    <source>
        <strain>Canton-S</strain>
        <tissue>Ovary</tissue>
    </source>
</reference>
<reference key="2">
    <citation type="journal article" date="2000" name="Science">
        <title>The genome sequence of Drosophila melanogaster.</title>
        <authorList>
            <person name="Adams M.D."/>
            <person name="Celniker S.E."/>
            <person name="Holt R.A."/>
            <person name="Evans C.A."/>
            <person name="Gocayne J.D."/>
            <person name="Amanatides P.G."/>
            <person name="Scherer S.E."/>
            <person name="Li P.W."/>
            <person name="Hoskins R.A."/>
            <person name="Galle R.F."/>
            <person name="George R.A."/>
            <person name="Lewis S.E."/>
            <person name="Richards S."/>
            <person name="Ashburner M."/>
            <person name="Henderson S.N."/>
            <person name="Sutton G.G."/>
            <person name="Wortman J.R."/>
            <person name="Yandell M.D."/>
            <person name="Zhang Q."/>
            <person name="Chen L.X."/>
            <person name="Brandon R.C."/>
            <person name="Rogers Y.-H.C."/>
            <person name="Blazej R.G."/>
            <person name="Champe M."/>
            <person name="Pfeiffer B.D."/>
            <person name="Wan K.H."/>
            <person name="Doyle C."/>
            <person name="Baxter E.G."/>
            <person name="Helt G."/>
            <person name="Nelson C.R."/>
            <person name="Miklos G.L.G."/>
            <person name="Abril J.F."/>
            <person name="Agbayani A."/>
            <person name="An H.-J."/>
            <person name="Andrews-Pfannkoch C."/>
            <person name="Baldwin D."/>
            <person name="Ballew R.M."/>
            <person name="Basu A."/>
            <person name="Baxendale J."/>
            <person name="Bayraktaroglu L."/>
            <person name="Beasley E.M."/>
            <person name="Beeson K.Y."/>
            <person name="Benos P.V."/>
            <person name="Berman B.P."/>
            <person name="Bhandari D."/>
            <person name="Bolshakov S."/>
            <person name="Borkova D."/>
            <person name="Botchan M.R."/>
            <person name="Bouck J."/>
            <person name="Brokstein P."/>
            <person name="Brottier P."/>
            <person name="Burtis K.C."/>
            <person name="Busam D.A."/>
            <person name="Butler H."/>
            <person name="Cadieu E."/>
            <person name="Center A."/>
            <person name="Chandra I."/>
            <person name="Cherry J.M."/>
            <person name="Cawley S."/>
            <person name="Dahlke C."/>
            <person name="Davenport L.B."/>
            <person name="Davies P."/>
            <person name="de Pablos B."/>
            <person name="Delcher A."/>
            <person name="Deng Z."/>
            <person name="Mays A.D."/>
            <person name="Dew I."/>
            <person name="Dietz S.M."/>
            <person name="Dodson K."/>
            <person name="Doup L.E."/>
            <person name="Downes M."/>
            <person name="Dugan-Rocha S."/>
            <person name="Dunkov B.C."/>
            <person name="Dunn P."/>
            <person name="Durbin K.J."/>
            <person name="Evangelista C.C."/>
            <person name="Ferraz C."/>
            <person name="Ferriera S."/>
            <person name="Fleischmann W."/>
            <person name="Fosler C."/>
            <person name="Gabrielian A.E."/>
            <person name="Garg N.S."/>
            <person name="Gelbart W.M."/>
            <person name="Glasser K."/>
            <person name="Glodek A."/>
            <person name="Gong F."/>
            <person name="Gorrell J.H."/>
            <person name="Gu Z."/>
            <person name="Guan P."/>
            <person name="Harris M."/>
            <person name="Harris N.L."/>
            <person name="Harvey D.A."/>
            <person name="Heiman T.J."/>
            <person name="Hernandez J.R."/>
            <person name="Houck J."/>
            <person name="Hostin D."/>
            <person name="Houston K.A."/>
            <person name="Howland T.J."/>
            <person name="Wei M.-H."/>
            <person name="Ibegwam C."/>
            <person name="Jalali M."/>
            <person name="Kalush F."/>
            <person name="Karpen G.H."/>
            <person name="Ke Z."/>
            <person name="Kennison J.A."/>
            <person name="Ketchum K.A."/>
            <person name="Kimmel B.E."/>
            <person name="Kodira C.D."/>
            <person name="Kraft C.L."/>
            <person name="Kravitz S."/>
            <person name="Kulp D."/>
            <person name="Lai Z."/>
            <person name="Lasko P."/>
            <person name="Lei Y."/>
            <person name="Levitsky A.A."/>
            <person name="Li J.H."/>
            <person name="Li Z."/>
            <person name="Liang Y."/>
            <person name="Lin X."/>
            <person name="Liu X."/>
            <person name="Mattei B."/>
            <person name="McIntosh T.C."/>
            <person name="McLeod M.P."/>
            <person name="McPherson D."/>
            <person name="Merkulov G."/>
            <person name="Milshina N.V."/>
            <person name="Mobarry C."/>
            <person name="Morris J."/>
            <person name="Moshrefi A."/>
            <person name="Mount S.M."/>
            <person name="Moy M."/>
            <person name="Murphy B."/>
            <person name="Murphy L."/>
            <person name="Muzny D.M."/>
            <person name="Nelson D.L."/>
            <person name="Nelson D.R."/>
            <person name="Nelson K.A."/>
            <person name="Nixon K."/>
            <person name="Nusskern D.R."/>
            <person name="Pacleb J.M."/>
            <person name="Palazzolo M."/>
            <person name="Pittman G.S."/>
            <person name="Pan S."/>
            <person name="Pollard J."/>
            <person name="Puri V."/>
            <person name="Reese M.G."/>
            <person name="Reinert K."/>
            <person name="Remington K."/>
            <person name="Saunders R.D.C."/>
            <person name="Scheeler F."/>
            <person name="Shen H."/>
            <person name="Shue B.C."/>
            <person name="Siden-Kiamos I."/>
            <person name="Simpson M."/>
            <person name="Skupski M.P."/>
            <person name="Smith T.J."/>
            <person name="Spier E."/>
            <person name="Spradling A.C."/>
            <person name="Stapleton M."/>
            <person name="Strong R."/>
            <person name="Sun E."/>
            <person name="Svirskas R."/>
            <person name="Tector C."/>
            <person name="Turner R."/>
            <person name="Venter E."/>
            <person name="Wang A.H."/>
            <person name="Wang X."/>
            <person name="Wang Z.-Y."/>
            <person name="Wassarman D.A."/>
            <person name="Weinstock G.M."/>
            <person name="Weissenbach J."/>
            <person name="Williams S.M."/>
            <person name="Woodage T."/>
            <person name="Worley K.C."/>
            <person name="Wu D."/>
            <person name="Yang S."/>
            <person name="Yao Q.A."/>
            <person name="Ye J."/>
            <person name="Yeh R.-F."/>
            <person name="Zaveri J.S."/>
            <person name="Zhan M."/>
            <person name="Zhang G."/>
            <person name="Zhao Q."/>
            <person name="Zheng L."/>
            <person name="Zheng X.H."/>
            <person name="Zhong F.N."/>
            <person name="Zhong W."/>
            <person name="Zhou X."/>
            <person name="Zhu S.C."/>
            <person name="Zhu X."/>
            <person name="Smith H.O."/>
            <person name="Gibbs R.A."/>
            <person name="Myers E.W."/>
            <person name="Rubin G.M."/>
            <person name="Venter J.C."/>
        </authorList>
    </citation>
    <scope>NUCLEOTIDE SEQUENCE [LARGE SCALE GENOMIC DNA]</scope>
    <source>
        <strain>Berkeley</strain>
    </source>
</reference>
<reference key="3">
    <citation type="journal article" date="2002" name="Genome Biol.">
        <title>Annotation of the Drosophila melanogaster euchromatic genome: a systematic review.</title>
        <authorList>
            <person name="Misra S."/>
            <person name="Crosby M.A."/>
            <person name="Mungall C.J."/>
            <person name="Matthews B.B."/>
            <person name="Campbell K.S."/>
            <person name="Hradecky P."/>
            <person name="Huang Y."/>
            <person name="Kaminker J.S."/>
            <person name="Millburn G.H."/>
            <person name="Prochnik S.E."/>
            <person name="Smith C.D."/>
            <person name="Tupy J.L."/>
            <person name="Whitfield E.J."/>
            <person name="Bayraktaroglu L."/>
            <person name="Berman B.P."/>
            <person name="Bettencourt B.R."/>
            <person name="Celniker S.E."/>
            <person name="de Grey A.D.N.J."/>
            <person name="Drysdale R.A."/>
            <person name="Harris N.L."/>
            <person name="Richter J."/>
            <person name="Russo S."/>
            <person name="Schroeder A.J."/>
            <person name="Shu S.Q."/>
            <person name="Stapleton M."/>
            <person name="Yamada C."/>
            <person name="Ashburner M."/>
            <person name="Gelbart W.M."/>
            <person name="Rubin G.M."/>
            <person name="Lewis S.E."/>
        </authorList>
    </citation>
    <scope>GENOME REANNOTATION</scope>
    <source>
        <strain>Berkeley</strain>
    </source>
</reference>
<reference key="4">
    <citation type="journal article" date="2002" name="Genome Biol.">
        <title>A Drosophila full-length cDNA resource.</title>
        <authorList>
            <person name="Stapleton M."/>
            <person name="Carlson J.W."/>
            <person name="Brokstein P."/>
            <person name="Yu C."/>
            <person name="Champe M."/>
            <person name="George R.A."/>
            <person name="Guarin H."/>
            <person name="Kronmiller B."/>
            <person name="Pacleb J.M."/>
            <person name="Park S."/>
            <person name="Wan K.H."/>
            <person name="Rubin G.M."/>
            <person name="Celniker S.E."/>
        </authorList>
    </citation>
    <scope>NUCLEOTIDE SEQUENCE [LARGE SCALE MRNA]</scope>
    <source>
        <strain>Berkeley</strain>
        <tissue>Embryo</tissue>
    </source>
</reference>
<reference key="5">
    <citation type="journal article" date="2006" name="Curr. Biol.">
        <title>The Sm-protein methyltransferase, dart5, is essential for germ-cell specification and maintenance.</title>
        <authorList>
            <person name="Gonsalvez G.B."/>
            <person name="Rajendra T.K."/>
            <person name="Tian L."/>
            <person name="Matera A.G."/>
        </authorList>
    </citation>
    <scope>INTERACTION WITH SMN</scope>
</reference>
<reference key="6">
    <citation type="journal article" date="2008" name="Proc. Natl. Acad. Sci. U.S.A.">
        <title>Evolution of an RNP assembly system: a minimal SMN complex facilitates formation of UsnRNPs in Drosophila melanogaster.</title>
        <authorList>
            <person name="Kroiss M."/>
            <person name="Schultz J."/>
            <person name="Wiesner J."/>
            <person name="Chari A."/>
            <person name="Sickmann A."/>
            <person name="Fischer U."/>
        </authorList>
    </citation>
    <scope>INTERACTION WITH THE SMN COMPLEX</scope>
</reference>
<reference key="7">
    <citation type="journal article" date="2008" name="RNA">
        <title>Sm protein methylation is dispensable for snRNP assembly in Drosophila melanogaster.</title>
        <authorList>
            <person name="Gonsalvez G.B."/>
            <person name="Praveen K."/>
            <person name="Hicks A.J."/>
            <person name="Tian L."/>
            <person name="Matera A.G."/>
        </authorList>
    </citation>
    <scope>METHYLATION</scope>
</reference>
<reference key="8">
    <citation type="journal article" date="2010" name="Development">
        <title>Sm proteins specify germ cell fate by facilitating oskar mRNA localization.</title>
        <authorList>
            <person name="Gonsalvez G.B."/>
            <person name="Rajendra T.K."/>
            <person name="Wen Y."/>
            <person name="Praveen K."/>
            <person name="Matera A.G."/>
        </authorList>
    </citation>
    <scope>FUNCTION</scope>
    <scope>INTERACTION WITH STAU AND YPS</scope>
    <scope>SUBCELLULAR LOCATION</scope>
    <scope>TISSUE SPECIFICITY</scope>
    <scope>DEVELOPMENTAL STAGE</scope>
</reference>
<reference key="9">
    <citation type="journal article" date="2007" name="Development">
        <title>Arginine methyltransferase Capsuleen is essential for methylation of spliceosomal Sm proteins and germ cell formation in Drosophila.</title>
        <authorList>
            <person name="Anne J."/>
            <person name="Ollo R."/>
            <person name="Ephrussi A."/>
            <person name="Mechler B.M."/>
        </authorList>
    </citation>
    <scope>INTERACTION WITH CSUL; VSL AND TUD</scope>
    <scope>TISSUE SPECIFICITY</scope>
    <scope>METHYLATION</scope>
</reference>
<reference key="10">
    <citation type="journal article" date="2010" name="Development">
        <title>Arginine methylation of SmB is required for Drosophila germ cell development.</title>
        <authorList>
            <person name="Anne J."/>
        </authorList>
    </citation>
    <scope>FUNCTION</scope>
    <scope>SUBCELLULAR LOCATION</scope>
    <scope>DEVELOPMENTAL STAGE</scope>
    <scope>METHYLATION</scope>
    <scope>MUTAGENESIS OF ARG-112; ARG-130; ARG-145; ARG-174; ARG-181; ARG-189 AND ARG-196</scope>
</reference>
<reference key="11">
    <citation type="journal article" date="2013" name="Mol. Biol. Cell">
        <title>Identification and characterization of Drosophila Snurportin reveals a role for the import receptor Moleskin/Importin7 in snRNP biogenesis.</title>
        <authorList>
            <person name="Natalizio A.H."/>
            <person name="Matera A.G."/>
        </authorList>
    </citation>
    <scope>INTERACTION WITH MSK AND SNUP</scope>
</reference>
<gene>
    <name type="primary">SmB</name>
    <name type="ORF">CG5352</name>
</gene>
<feature type="chain" id="PRO_0000125526" description="Small nuclear ribonucleoprotein-associated protein B">
    <location>
        <begin position="1"/>
        <end position="199"/>
    </location>
</feature>
<feature type="domain" description="Sm" evidence="2">
    <location>
        <begin position="4"/>
        <end position="86"/>
    </location>
</feature>
<feature type="repeat" description="1">
    <location>
        <begin position="111"/>
        <end position="113"/>
    </location>
</feature>
<feature type="repeat" description="2">
    <location>
        <begin position="144"/>
        <end position="146"/>
    </location>
</feature>
<feature type="repeat" description="3">
    <location>
        <begin position="173"/>
        <end position="175"/>
    </location>
</feature>
<feature type="repeat" description="4">
    <location>
        <begin position="195"/>
        <end position="197"/>
    </location>
</feature>
<feature type="region of interest" description="4 X 3 AA repeats of G-R-G">
    <location>
        <begin position="111"/>
        <end position="197"/>
    </location>
</feature>
<feature type="region of interest" description="Disordered" evidence="3">
    <location>
        <begin position="170"/>
        <end position="199"/>
    </location>
</feature>
<feature type="compositionally biased region" description="Pro residues" evidence="3">
    <location>
        <begin position="176"/>
        <end position="199"/>
    </location>
</feature>
<feature type="mutagenesis site" description="Unable to localize to the pole plasm; when associated with G-130; L-145; L-174; L-181; L-189 and G-196." evidence="9">
    <original>R</original>
    <variation>L</variation>
    <location>
        <position position="112"/>
    </location>
</feature>
<feature type="mutagenesis site" description="Unable to localize to the pole plasm; when associated with L-112; L-145; L-174; L-181; L-189 and G-196." evidence="9">
    <original>R</original>
    <variation>G</variation>
    <location>
        <position position="130"/>
    </location>
</feature>
<feature type="mutagenesis site" description="Unable to localize to the pole plasm; when associated with L-112; G-130; L-174; L-181; L-189 and G-196." evidence="9">
    <original>R</original>
    <variation>L</variation>
    <location>
        <position position="145"/>
    </location>
</feature>
<feature type="mutagenesis site" description="Unable to localize to the pole plasm; when associated with L-112; G-130; L-145; L-181; L-189 and G-196." evidence="9">
    <original>R</original>
    <variation>L</variation>
    <location>
        <position position="174"/>
    </location>
</feature>
<feature type="mutagenesis site" description="Unable to localize to the pole plasm; when associated with L-112; G-130; L-145; L-174; L-189 and G-196." evidence="9">
    <original>R</original>
    <variation>L</variation>
    <location>
        <position position="181"/>
    </location>
</feature>
<feature type="mutagenesis site" description="Unable to localize to the pole plasm; when associated with L-112; G-130; L-145; L-174; L-181 and G-196." evidence="9">
    <original>R</original>
    <variation>L</variation>
    <location>
        <position position="189"/>
    </location>
</feature>
<feature type="mutagenesis site" description="Unable to localize to the pole plasm; when associated with L-112; G-130; L-145; L-174; L-181 and L-189." evidence="9">
    <original>R</original>
    <variation>G</variation>
    <location>
        <position position="196"/>
    </location>
</feature>
<dbReference type="EMBL" id="L02919">
    <property type="protein sequence ID" value="AAA28858.1"/>
    <property type="molecule type" value="mRNA"/>
</dbReference>
<dbReference type="EMBL" id="AE014134">
    <property type="protein sequence ID" value="ADV37030.1"/>
    <property type="molecule type" value="Genomic_DNA"/>
</dbReference>
<dbReference type="EMBL" id="AY061171">
    <property type="protein sequence ID" value="AAL28719.1"/>
    <property type="molecule type" value="mRNA"/>
</dbReference>
<dbReference type="PIR" id="JN0574">
    <property type="entry name" value="JN0574"/>
</dbReference>
<dbReference type="RefSeq" id="NP_001188780.1">
    <property type="nucleotide sequence ID" value="NM_001201851.2"/>
</dbReference>
<dbReference type="SMR" id="Q05856"/>
<dbReference type="BioGRID" id="60507">
    <property type="interactions" value="78"/>
</dbReference>
<dbReference type="ComplexPortal" id="CPX-2559">
    <property type="entry name" value="U7 small nuclear ribonucleoprotein complex"/>
</dbReference>
<dbReference type="DIP" id="DIP-18712N"/>
<dbReference type="FunCoup" id="Q05856">
    <property type="interactions" value="1518"/>
</dbReference>
<dbReference type="IntAct" id="Q05856">
    <property type="interactions" value="35"/>
</dbReference>
<dbReference type="STRING" id="7227.FBpp0293061"/>
<dbReference type="PaxDb" id="7227-FBpp0293061"/>
<dbReference type="DNASU" id="34426"/>
<dbReference type="EnsemblMetazoa" id="FBtr0304118">
    <property type="protein sequence ID" value="FBpp0293061"/>
    <property type="gene ID" value="FBgn0262601"/>
</dbReference>
<dbReference type="GeneID" id="34426"/>
<dbReference type="KEGG" id="dme:Dmel_CG5352"/>
<dbReference type="AGR" id="FB:FBgn0262601"/>
<dbReference type="CTD" id="34426"/>
<dbReference type="FlyBase" id="FBgn0262601">
    <property type="gene designation" value="SmB"/>
</dbReference>
<dbReference type="VEuPathDB" id="VectorBase:FBgn0262601"/>
<dbReference type="eggNOG" id="KOG3168">
    <property type="taxonomic scope" value="Eukaryota"/>
</dbReference>
<dbReference type="GeneTree" id="ENSGT00940000155052"/>
<dbReference type="HOGENOM" id="CLU_076902_1_0_1"/>
<dbReference type="InParanoid" id="Q05856"/>
<dbReference type="OMA" id="KMINYRM"/>
<dbReference type="OrthoDB" id="2020720at2759"/>
<dbReference type="PhylomeDB" id="Q05856"/>
<dbReference type="Reactome" id="R-DME-111367">
    <property type="pathway name" value="SLBP independent Processing of Histone Pre-mRNAs"/>
</dbReference>
<dbReference type="Reactome" id="R-DME-72163">
    <property type="pathway name" value="mRNA Splicing - Major Pathway"/>
</dbReference>
<dbReference type="Reactome" id="R-DME-72165">
    <property type="pathway name" value="mRNA Splicing - Minor Pathway"/>
</dbReference>
<dbReference type="Reactome" id="R-DME-73856">
    <property type="pathway name" value="RNA Polymerase II Transcription Termination"/>
</dbReference>
<dbReference type="Reactome" id="R-DME-77588">
    <property type="pathway name" value="SLBP Dependent Processing of Replication-Dependent Histone Pre-mRNAs"/>
</dbReference>
<dbReference type="BioGRID-ORCS" id="34426">
    <property type="hits" value="0 hits in 3 CRISPR screens"/>
</dbReference>
<dbReference type="GenomeRNAi" id="34426"/>
<dbReference type="PRO" id="PR:Q05856"/>
<dbReference type="Proteomes" id="UP000000803">
    <property type="component" value="Chromosome 2L"/>
</dbReference>
<dbReference type="Bgee" id="FBgn0262601">
    <property type="expression patterns" value="Expressed in adult abdomen and 125 other cell types or tissues"/>
</dbReference>
<dbReference type="GO" id="GO:0015030">
    <property type="term" value="C:Cajal body"/>
    <property type="evidence" value="ECO:0000314"/>
    <property type="project" value="FlyBase"/>
</dbReference>
<dbReference type="GO" id="GO:0071013">
    <property type="term" value="C:catalytic step 2 spliceosome"/>
    <property type="evidence" value="ECO:0007005"/>
    <property type="project" value="FlyBase"/>
</dbReference>
<dbReference type="GO" id="GO:0005737">
    <property type="term" value="C:cytoplasm"/>
    <property type="evidence" value="ECO:0000318"/>
    <property type="project" value="GO_Central"/>
</dbReference>
<dbReference type="GO" id="GO:0005829">
    <property type="term" value="C:cytosol"/>
    <property type="evidence" value="ECO:0007669"/>
    <property type="project" value="UniProtKB-SubCell"/>
</dbReference>
<dbReference type="GO" id="GO:0005634">
    <property type="term" value="C:nucleus"/>
    <property type="evidence" value="ECO:0000314"/>
    <property type="project" value="FlyBase"/>
</dbReference>
<dbReference type="GO" id="GO:0045495">
    <property type="term" value="C:pole plasm"/>
    <property type="evidence" value="ECO:0000314"/>
    <property type="project" value="FlyBase"/>
</dbReference>
<dbReference type="GO" id="GO:0071011">
    <property type="term" value="C:precatalytic spliceosome"/>
    <property type="evidence" value="ECO:0007005"/>
    <property type="project" value="FlyBase"/>
</dbReference>
<dbReference type="GO" id="GO:0030532">
    <property type="term" value="C:small nuclear ribonucleoprotein complex"/>
    <property type="evidence" value="ECO:0000250"/>
    <property type="project" value="FlyBase"/>
</dbReference>
<dbReference type="GO" id="GO:0005681">
    <property type="term" value="C:spliceosomal complex"/>
    <property type="evidence" value="ECO:0000250"/>
    <property type="project" value="FlyBase"/>
</dbReference>
<dbReference type="GO" id="GO:0005685">
    <property type="term" value="C:U1 snRNP"/>
    <property type="evidence" value="ECO:0000318"/>
    <property type="project" value="GO_Central"/>
</dbReference>
<dbReference type="GO" id="GO:0005686">
    <property type="term" value="C:U2 snRNP"/>
    <property type="evidence" value="ECO:0000318"/>
    <property type="project" value="GO_Central"/>
</dbReference>
<dbReference type="GO" id="GO:0071004">
    <property type="term" value="C:U2-type prespliceosome"/>
    <property type="evidence" value="ECO:0000318"/>
    <property type="project" value="GO_Central"/>
</dbReference>
<dbReference type="GO" id="GO:0005687">
    <property type="term" value="C:U4 snRNP"/>
    <property type="evidence" value="ECO:0000318"/>
    <property type="project" value="GO_Central"/>
</dbReference>
<dbReference type="GO" id="GO:0046540">
    <property type="term" value="C:U4/U6 x U5 tri-snRNP complex"/>
    <property type="evidence" value="ECO:0000318"/>
    <property type="project" value="GO_Central"/>
</dbReference>
<dbReference type="GO" id="GO:0005682">
    <property type="term" value="C:U5 snRNP"/>
    <property type="evidence" value="ECO:0000318"/>
    <property type="project" value="GO_Central"/>
</dbReference>
<dbReference type="GO" id="GO:0003723">
    <property type="term" value="F:RNA binding"/>
    <property type="evidence" value="ECO:0000250"/>
    <property type="project" value="FlyBase"/>
</dbReference>
<dbReference type="GO" id="GO:0070990">
    <property type="term" value="F:snRNP binding"/>
    <property type="evidence" value="ECO:0000318"/>
    <property type="project" value="GO_Central"/>
</dbReference>
<dbReference type="GO" id="GO:0007281">
    <property type="term" value="P:germ cell development"/>
    <property type="evidence" value="ECO:0000315"/>
    <property type="project" value="FlyBase"/>
</dbReference>
<dbReference type="GO" id="GO:0008406">
    <property type="term" value="P:gonad development"/>
    <property type="evidence" value="ECO:0000315"/>
    <property type="project" value="FlyBase"/>
</dbReference>
<dbReference type="GO" id="GO:0000398">
    <property type="term" value="P:mRNA splicing, via spliceosome"/>
    <property type="evidence" value="ECO:0000318"/>
    <property type="project" value="GO_Central"/>
</dbReference>
<dbReference type="GO" id="GO:0007283">
    <property type="term" value="P:spermatogenesis"/>
    <property type="evidence" value="ECO:0000315"/>
    <property type="project" value="FlyBase"/>
</dbReference>
<dbReference type="CDD" id="cd01717">
    <property type="entry name" value="Sm_B"/>
    <property type="match status" value="1"/>
</dbReference>
<dbReference type="FunFam" id="2.30.30.100:FF:000004">
    <property type="entry name" value="Small nuclear ribonucleoprotein-associated proteins"/>
    <property type="match status" value="1"/>
</dbReference>
<dbReference type="Gene3D" id="2.30.30.100">
    <property type="match status" value="1"/>
</dbReference>
<dbReference type="InterPro" id="IPR010920">
    <property type="entry name" value="LSM_dom_sf"/>
</dbReference>
<dbReference type="InterPro" id="IPR047575">
    <property type="entry name" value="Sm"/>
</dbReference>
<dbReference type="InterPro" id="IPR001163">
    <property type="entry name" value="Sm_dom_euk/arc"/>
</dbReference>
<dbReference type="InterPro" id="IPR017131">
    <property type="entry name" value="snRNP-assoc_SmB/SmN"/>
</dbReference>
<dbReference type="InterPro" id="IPR050914">
    <property type="entry name" value="snRNP_SmB/NAA38-like"/>
</dbReference>
<dbReference type="PANTHER" id="PTHR10701:SF0">
    <property type="entry name" value="SMALL NUCLEAR RIBONUCLEOPROTEIN-ASSOCIATED PROTEIN B"/>
    <property type="match status" value="1"/>
</dbReference>
<dbReference type="PANTHER" id="PTHR10701">
    <property type="entry name" value="SMALL NUCLEAR RIBONUCLEOPROTEIN-ASSOCIATED PROTEIN B AND N"/>
    <property type="match status" value="1"/>
</dbReference>
<dbReference type="Pfam" id="PF01423">
    <property type="entry name" value="LSM"/>
    <property type="match status" value="1"/>
</dbReference>
<dbReference type="PIRSF" id="PIRSF037187">
    <property type="entry name" value="snRNP_SmB/SmN"/>
    <property type="match status" value="1"/>
</dbReference>
<dbReference type="SMART" id="SM00651">
    <property type="entry name" value="Sm"/>
    <property type="match status" value="1"/>
</dbReference>
<dbReference type="SUPFAM" id="SSF50182">
    <property type="entry name" value="Sm-like ribonucleoproteins"/>
    <property type="match status" value="1"/>
</dbReference>
<dbReference type="PROSITE" id="PS52002">
    <property type="entry name" value="SM"/>
    <property type="match status" value="1"/>
</dbReference>
<name>RSMB_DROME</name>
<comment type="function">
    <text evidence="1 8 9">Plays a role in pre-mRNA splicing as a core component of the spliceosomal U1, U2, U4 and U5 small nuclear ribonucleoproteins (snRNPs), the building blocks of the spliceosome (By similarity). Involved in germline establishment and development (PubMed:20570937, PubMed:20659974).</text>
</comment>
<comment type="subunit">
    <text evidence="4 5 7 8 10">Component of the osk mRNP (PubMed:20570937). Interacts with stau and yps (PubMed:20570937). Interacts with csul (via the N-terminal region) (PubMed:17164419). Interacts with vls (PubMed:17164419). Interacts (methylated) with tud (PubMed:17164419). Interacts with Smn; this interaction may be favored by SmB methylation (PubMed:16753561). Interacts with the SMN complex (PubMed:18621711). Interacts with msk and Snup; these interactions are RNA-dependent (PubMed:23885126).</text>
</comment>
<comment type="subcellular location">
    <subcellularLocation>
        <location evidence="1">Nucleus</location>
    </subcellularLocation>
    <subcellularLocation>
        <location evidence="11">Nucleus</location>
        <location evidence="11">Cajal body</location>
    </subcellularLocation>
    <subcellularLocation>
        <location evidence="1">Cytoplasm</location>
        <location evidence="1">Cytosol</location>
    </subcellularLocation>
</comment>
<comment type="tissue specificity">
    <text evidence="5 8">Expressed in the posterior part of the oocyte and embryo. Expressed in the pole plasm (at protein level), colocalizing with SmD3.</text>
</comment>
<comment type="developmental stage">
    <text evidence="8 9">Maternally and zygotically expressed. In early stages of egg chamber development, predominantly accumulated in the nuclei of nurse cells and oocyte. Enriched at the posterior of stage 10 oocytes which persists after fertilization, at the posterior of pre-blastoderm stage embryos.</text>
</comment>
<comment type="PTM">
    <text evidence="5 6 9">Symmetrically dimethylated on arginine residues present in the RG repeats by csul (or csul-vls complex) and Art7; methylation is not required for assembly and biogenesis of snRNPs, but required for pole plasm localization. There seems to be a specific role of two subsets of arginine residues in the C-terminal region: the subset containing Arg-112, Arg-130 and Arg-145 is required during embryogenesis for gonad formation, whereas the subset containing Arg-174, Arg-181, Arg-189 and Arg-196 is involved in pole cell formation by controlling polar granule maintenance at the posterior pole of the oocyte.</text>
</comment>
<comment type="similarity">
    <text evidence="11">Belongs to the snRNP SmB/SmN family.</text>
</comment>